<comment type="subunit">
    <text evidence="1">Part of the 30S ribosomal subunit.</text>
</comment>
<comment type="similarity">
    <text evidence="1">Belongs to the universal ribosomal protein uS15 family.</text>
</comment>
<protein>
    <recommendedName>
        <fullName evidence="1">Small ribosomal subunit protein uS15</fullName>
    </recommendedName>
    <alternativeName>
        <fullName evidence="2">30S ribosomal protein S15</fullName>
    </alternativeName>
</protein>
<accession>Q2NIA9</accession>
<reference key="1">
    <citation type="journal article" date="2006" name="J. Bacteriol.">
        <title>The genome sequence of Methanosphaera stadtmanae reveals why this human intestinal archaeon is restricted to methanol and H2 for methane formation and ATP synthesis.</title>
        <authorList>
            <person name="Fricke W.F."/>
            <person name="Seedorf H."/>
            <person name="Henne A."/>
            <person name="Kruer M."/>
            <person name="Liesegang H."/>
            <person name="Hedderich R."/>
            <person name="Gottschalk G."/>
            <person name="Thauer R.K."/>
        </authorList>
    </citation>
    <scope>NUCLEOTIDE SEQUENCE [LARGE SCALE GENOMIC DNA]</scope>
    <source>
        <strain>ATCC 43021 / DSM 3091 / JCM 11832 / MCB-3</strain>
    </source>
</reference>
<organism>
    <name type="scientific">Methanosphaera stadtmanae (strain ATCC 43021 / DSM 3091 / JCM 11832 / MCB-3)</name>
    <dbReference type="NCBI Taxonomy" id="339860"/>
    <lineage>
        <taxon>Archaea</taxon>
        <taxon>Methanobacteriati</taxon>
        <taxon>Methanobacteriota</taxon>
        <taxon>Methanomada group</taxon>
        <taxon>Methanobacteria</taxon>
        <taxon>Methanobacteriales</taxon>
        <taxon>Methanobacteriaceae</taxon>
        <taxon>Methanosphaera</taxon>
    </lineage>
</organism>
<proteinExistence type="inferred from homology"/>
<keyword id="KW-1185">Reference proteome</keyword>
<keyword id="KW-0687">Ribonucleoprotein</keyword>
<keyword id="KW-0689">Ribosomal protein</keyword>
<sequence>MAAKPEWVEQSPEEIEELIVKLHKEGQSTSQIGITLRDQHGIPNTKAVLGEKITDILKRNGTDFEYPEDLLNLIKRAVNIREHLEENPKDIHTKRGLIKIESKIRRLVKYYTRNNVLPEGWRYDPKTAALLVK</sequence>
<name>RS15_METST</name>
<evidence type="ECO:0000255" key="1">
    <source>
        <dbReference type="HAMAP-Rule" id="MF_01343"/>
    </source>
</evidence>
<evidence type="ECO:0000305" key="2"/>
<dbReference type="EMBL" id="CP000102">
    <property type="protein sequence ID" value="ABC56430.1"/>
    <property type="molecule type" value="Genomic_DNA"/>
</dbReference>
<dbReference type="RefSeq" id="WP_011405629.1">
    <property type="nucleotide sequence ID" value="NC_007681.1"/>
</dbReference>
<dbReference type="SMR" id="Q2NIA9"/>
<dbReference type="STRING" id="339860.Msp_0010"/>
<dbReference type="KEGG" id="mst:Msp_0010"/>
<dbReference type="eggNOG" id="arCOG04185">
    <property type="taxonomic scope" value="Archaea"/>
</dbReference>
<dbReference type="HOGENOM" id="CLU_090139_2_0_2"/>
<dbReference type="OrthoDB" id="6533at2157"/>
<dbReference type="Proteomes" id="UP000001931">
    <property type="component" value="Chromosome"/>
</dbReference>
<dbReference type="GO" id="GO:0022627">
    <property type="term" value="C:cytosolic small ribosomal subunit"/>
    <property type="evidence" value="ECO:0007669"/>
    <property type="project" value="TreeGrafter"/>
</dbReference>
<dbReference type="GO" id="GO:0070181">
    <property type="term" value="F:small ribosomal subunit rRNA binding"/>
    <property type="evidence" value="ECO:0007669"/>
    <property type="project" value="TreeGrafter"/>
</dbReference>
<dbReference type="GO" id="GO:0003735">
    <property type="term" value="F:structural constituent of ribosome"/>
    <property type="evidence" value="ECO:0007669"/>
    <property type="project" value="InterPro"/>
</dbReference>
<dbReference type="GO" id="GO:0006412">
    <property type="term" value="P:translation"/>
    <property type="evidence" value="ECO:0007669"/>
    <property type="project" value="UniProtKB-UniRule"/>
</dbReference>
<dbReference type="CDD" id="cd00353">
    <property type="entry name" value="Ribosomal_S15p_S13e"/>
    <property type="match status" value="1"/>
</dbReference>
<dbReference type="FunFam" id="1.10.287.10:FF:000003">
    <property type="entry name" value="40S ribosomal protein S13"/>
    <property type="match status" value="1"/>
</dbReference>
<dbReference type="Gene3D" id="4.10.860.130">
    <property type="match status" value="1"/>
</dbReference>
<dbReference type="Gene3D" id="1.10.287.10">
    <property type="entry name" value="S15/NS1, RNA-binding"/>
    <property type="match status" value="1"/>
</dbReference>
<dbReference type="HAMAP" id="MF_01343_A">
    <property type="entry name" value="Ribosomal_uS15_A"/>
    <property type="match status" value="1"/>
</dbReference>
<dbReference type="InterPro" id="IPR000589">
    <property type="entry name" value="Ribosomal_uS15"/>
</dbReference>
<dbReference type="InterPro" id="IPR023029">
    <property type="entry name" value="Ribosomal_uS15_arc_euk"/>
</dbReference>
<dbReference type="InterPro" id="IPR012606">
    <property type="entry name" value="Ribosomal_uS15_N"/>
</dbReference>
<dbReference type="InterPro" id="IPR009068">
    <property type="entry name" value="uS15_NS1_RNA-bd_sf"/>
</dbReference>
<dbReference type="NCBIfam" id="NF006331">
    <property type="entry name" value="PRK08561.1"/>
    <property type="match status" value="1"/>
</dbReference>
<dbReference type="PANTHER" id="PTHR11885">
    <property type="entry name" value="RIBOSOMAL PROTEIN S15P/S13E"/>
    <property type="match status" value="1"/>
</dbReference>
<dbReference type="PANTHER" id="PTHR11885:SF6">
    <property type="entry name" value="SMALL RIBOSOMAL SUBUNIT PROTEIN US15"/>
    <property type="match status" value="1"/>
</dbReference>
<dbReference type="Pfam" id="PF08069">
    <property type="entry name" value="Ribosomal_S13_N"/>
    <property type="match status" value="1"/>
</dbReference>
<dbReference type="Pfam" id="PF00312">
    <property type="entry name" value="Ribosomal_S15"/>
    <property type="match status" value="1"/>
</dbReference>
<dbReference type="SMART" id="SM01386">
    <property type="entry name" value="Ribosomal_S13_N"/>
    <property type="match status" value="1"/>
</dbReference>
<dbReference type="SMART" id="SM01387">
    <property type="entry name" value="Ribosomal_S15"/>
    <property type="match status" value="1"/>
</dbReference>
<dbReference type="SUPFAM" id="SSF47060">
    <property type="entry name" value="S15/NS1 RNA-binding domain"/>
    <property type="match status" value="1"/>
</dbReference>
<dbReference type="PROSITE" id="PS00362">
    <property type="entry name" value="RIBOSOMAL_S15"/>
    <property type="match status" value="1"/>
</dbReference>
<gene>
    <name evidence="1" type="primary">rps15</name>
    <name type="ordered locus">Msp_0010</name>
</gene>
<feature type="chain" id="PRO_0000354228" description="Small ribosomal subunit protein uS15">
    <location>
        <begin position="1"/>
        <end position="133"/>
    </location>
</feature>